<accession>P0AGD4</accession>
<accession>P09157</accession>
<protein>
    <recommendedName>
        <fullName>Superoxide dismutase [Fe]</fullName>
        <ecNumber>1.15.1.1</ecNumber>
    </recommendedName>
</protein>
<dbReference type="EC" id="1.15.1.1"/>
<dbReference type="EMBL" id="AE014075">
    <property type="protein sequence ID" value="AAN80510.1"/>
    <property type="molecule type" value="Genomic_DNA"/>
</dbReference>
<dbReference type="RefSeq" id="WP_000007283.1">
    <property type="nucleotide sequence ID" value="NZ_CP051263.1"/>
</dbReference>
<dbReference type="BMRB" id="P0AGD4"/>
<dbReference type="SMR" id="P0AGD4"/>
<dbReference type="STRING" id="199310.c2050"/>
<dbReference type="GeneID" id="93775810"/>
<dbReference type="KEGG" id="ecc:c2050"/>
<dbReference type="eggNOG" id="COG0605">
    <property type="taxonomic scope" value="Bacteria"/>
</dbReference>
<dbReference type="HOGENOM" id="CLU_031625_0_0_6"/>
<dbReference type="BioCyc" id="ECOL199310:C2050-MONOMER"/>
<dbReference type="Proteomes" id="UP000001410">
    <property type="component" value="Chromosome"/>
</dbReference>
<dbReference type="GO" id="GO:0046872">
    <property type="term" value="F:metal ion binding"/>
    <property type="evidence" value="ECO:0007669"/>
    <property type="project" value="UniProtKB-KW"/>
</dbReference>
<dbReference type="GO" id="GO:0004784">
    <property type="term" value="F:superoxide dismutase activity"/>
    <property type="evidence" value="ECO:0007669"/>
    <property type="project" value="UniProtKB-EC"/>
</dbReference>
<dbReference type="FunFam" id="1.10.287.990:FF:000002">
    <property type="entry name" value="Superoxide dismutase"/>
    <property type="match status" value="1"/>
</dbReference>
<dbReference type="FunFam" id="3.55.40.20:FF:000001">
    <property type="entry name" value="Superoxide dismutase"/>
    <property type="match status" value="1"/>
</dbReference>
<dbReference type="Gene3D" id="1.10.287.990">
    <property type="entry name" value="Fe,Mn superoxide dismutase (SOD) domain"/>
    <property type="match status" value="1"/>
</dbReference>
<dbReference type="Gene3D" id="3.55.40.20">
    <property type="entry name" value="Iron/manganese superoxide dismutase, C-terminal domain"/>
    <property type="match status" value="1"/>
</dbReference>
<dbReference type="InterPro" id="IPR001189">
    <property type="entry name" value="Mn/Fe_SOD"/>
</dbReference>
<dbReference type="InterPro" id="IPR019833">
    <property type="entry name" value="Mn/Fe_SOD_BS"/>
</dbReference>
<dbReference type="InterPro" id="IPR019832">
    <property type="entry name" value="Mn/Fe_SOD_C"/>
</dbReference>
<dbReference type="InterPro" id="IPR019831">
    <property type="entry name" value="Mn/Fe_SOD_N"/>
</dbReference>
<dbReference type="InterPro" id="IPR036324">
    <property type="entry name" value="Mn/Fe_SOD_N_sf"/>
</dbReference>
<dbReference type="InterPro" id="IPR036314">
    <property type="entry name" value="SOD_C_sf"/>
</dbReference>
<dbReference type="NCBIfam" id="NF007832">
    <property type="entry name" value="PRK10543.1"/>
    <property type="match status" value="1"/>
</dbReference>
<dbReference type="PANTHER" id="PTHR42769">
    <property type="entry name" value="SUPEROXIDE DISMUTASE"/>
    <property type="match status" value="1"/>
</dbReference>
<dbReference type="PANTHER" id="PTHR42769:SF3">
    <property type="entry name" value="SUPEROXIDE DISMUTASE [FE] 2, CHLOROPLASTIC"/>
    <property type="match status" value="1"/>
</dbReference>
<dbReference type="Pfam" id="PF02777">
    <property type="entry name" value="Sod_Fe_C"/>
    <property type="match status" value="1"/>
</dbReference>
<dbReference type="Pfam" id="PF00081">
    <property type="entry name" value="Sod_Fe_N"/>
    <property type="match status" value="1"/>
</dbReference>
<dbReference type="PIRSF" id="PIRSF000349">
    <property type="entry name" value="SODismutase"/>
    <property type="match status" value="1"/>
</dbReference>
<dbReference type="PRINTS" id="PR01703">
    <property type="entry name" value="MNSODISMTASE"/>
</dbReference>
<dbReference type="SUPFAM" id="SSF54719">
    <property type="entry name" value="Fe,Mn superoxide dismutase (SOD), C-terminal domain"/>
    <property type="match status" value="1"/>
</dbReference>
<dbReference type="SUPFAM" id="SSF46609">
    <property type="entry name" value="Fe,Mn superoxide dismutase (SOD), N-terminal domain"/>
    <property type="match status" value="1"/>
</dbReference>
<dbReference type="PROSITE" id="PS00088">
    <property type="entry name" value="SOD_MN"/>
    <property type="match status" value="1"/>
</dbReference>
<evidence type="ECO:0000250" key="1"/>
<evidence type="ECO:0000305" key="2"/>
<sequence length="193" mass="21266">MSFELPALPYAKDALAPHISAETIEYHYGKHHQTYVTNLNNLIKGTAFEGKSLEEIIRSSEGGVFNNAAQVWNHTFYWNCLAPNAGGEPTGKVAEAIAASFGSFADFKAQFTDAAIKNFGSGWTWLVKNSDGKLAIVSTSNAGTPLTTDATPLLTVDVWEHAYYIDYRNARPGYLEHFWALVNWEFVAKNLAA</sequence>
<comment type="function">
    <text evidence="1">Destroys superoxide anion radicals which are normally produced within the cells and which are toxic to biological systems.</text>
</comment>
<comment type="catalytic activity">
    <reaction>
        <text>2 superoxide + 2 H(+) = H2O2 + O2</text>
        <dbReference type="Rhea" id="RHEA:20696"/>
        <dbReference type="ChEBI" id="CHEBI:15378"/>
        <dbReference type="ChEBI" id="CHEBI:15379"/>
        <dbReference type="ChEBI" id="CHEBI:16240"/>
        <dbReference type="ChEBI" id="CHEBI:18421"/>
        <dbReference type="EC" id="1.15.1.1"/>
    </reaction>
</comment>
<comment type="cofactor">
    <cofactor evidence="1">
        <name>Fe cation</name>
        <dbReference type="ChEBI" id="CHEBI:24875"/>
    </cofactor>
    <text evidence="1">Binds 1 Fe cation per subunit.</text>
</comment>
<comment type="subunit">
    <text evidence="1">Homodimer.</text>
</comment>
<comment type="similarity">
    <text evidence="2">Belongs to the iron/manganese superoxide dismutase family.</text>
</comment>
<keyword id="KW-0007">Acetylation</keyword>
<keyword id="KW-0408">Iron</keyword>
<keyword id="KW-0479">Metal-binding</keyword>
<keyword id="KW-0560">Oxidoreductase</keyword>
<keyword id="KW-1185">Reference proteome</keyword>
<proteinExistence type="inferred from homology"/>
<gene>
    <name type="primary">sodB</name>
    <name type="ordered locus">c2050</name>
</gene>
<organism>
    <name type="scientific">Escherichia coli O6:H1 (strain CFT073 / ATCC 700928 / UPEC)</name>
    <dbReference type="NCBI Taxonomy" id="199310"/>
    <lineage>
        <taxon>Bacteria</taxon>
        <taxon>Pseudomonadati</taxon>
        <taxon>Pseudomonadota</taxon>
        <taxon>Gammaproteobacteria</taxon>
        <taxon>Enterobacterales</taxon>
        <taxon>Enterobacteriaceae</taxon>
        <taxon>Escherichia</taxon>
    </lineage>
</organism>
<name>SODF_ECOL6</name>
<feature type="initiator methionine" description="Removed" evidence="1">
    <location>
        <position position="1"/>
    </location>
</feature>
<feature type="chain" id="PRO_0000159981" description="Superoxide dismutase [Fe]">
    <location>
        <begin position="2"/>
        <end position="193"/>
    </location>
</feature>
<feature type="binding site" evidence="1">
    <location>
        <position position="27"/>
    </location>
    <ligand>
        <name>Fe cation</name>
        <dbReference type="ChEBI" id="CHEBI:24875"/>
    </ligand>
</feature>
<feature type="binding site" evidence="1">
    <location>
        <position position="74"/>
    </location>
    <ligand>
        <name>Fe cation</name>
        <dbReference type="ChEBI" id="CHEBI:24875"/>
    </ligand>
</feature>
<feature type="binding site" evidence="1">
    <location>
        <position position="157"/>
    </location>
    <ligand>
        <name>Fe cation</name>
        <dbReference type="ChEBI" id="CHEBI:24875"/>
    </ligand>
</feature>
<feature type="binding site" evidence="1">
    <location>
        <position position="161"/>
    </location>
    <ligand>
        <name>Fe cation</name>
        <dbReference type="ChEBI" id="CHEBI:24875"/>
    </ligand>
</feature>
<feature type="modified residue" description="N6-acetyllysine" evidence="1">
    <location>
        <position position="51"/>
    </location>
</feature>
<reference key="1">
    <citation type="journal article" date="2002" name="Proc. Natl. Acad. Sci. U.S.A.">
        <title>Extensive mosaic structure revealed by the complete genome sequence of uropathogenic Escherichia coli.</title>
        <authorList>
            <person name="Welch R.A."/>
            <person name="Burland V."/>
            <person name="Plunkett G. III"/>
            <person name="Redford P."/>
            <person name="Roesch P."/>
            <person name="Rasko D."/>
            <person name="Buckles E.L."/>
            <person name="Liou S.-R."/>
            <person name="Boutin A."/>
            <person name="Hackett J."/>
            <person name="Stroud D."/>
            <person name="Mayhew G.F."/>
            <person name="Rose D.J."/>
            <person name="Zhou S."/>
            <person name="Schwartz D.C."/>
            <person name="Perna N.T."/>
            <person name="Mobley H.L.T."/>
            <person name="Donnenberg M.S."/>
            <person name="Blattner F.R."/>
        </authorList>
    </citation>
    <scope>NUCLEOTIDE SEQUENCE [LARGE SCALE GENOMIC DNA]</scope>
    <source>
        <strain>CFT073 / ATCC 700928 / UPEC</strain>
    </source>
</reference>